<keyword id="KW-0131">Cell cycle</keyword>
<keyword id="KW-0597">Phosphoprotein</keyword>
<keyword id="KW-1185">Reference proteome</keyword>
<keyword id="KW-0926">Vacuole</keyword>
<gene>
    <name type="primary">far11</name>
    <name type="ORF">pi074</name>
    <name type="ORF">SPBC27B12.04c</name>
</gene>
<dbReference type="EMBL" id="AB004539">
    <property type="protein sequence ID" value="BAA21456.1"/>
    <property type="molecule type" value="Genomic_DNA"/>
</dbReference>
<dbReference type="EMBL" id="CU329671">
    <property type="protein sequence ID" value="CAA16899.1"/>
    <property type="molecule type" value="Genomic_DNA"/>
</dbReference>
<dbReference type="PIR" id="T40028">
    <property type="entry name" value="T40028"/>
</dbReference>
<dbReference type="RefSeq" id="NP_595536.1">
    <property type="nucleotide sequence ID" value="NM_001021447.2"/>
</dbReference>
<dbReference type="SMR" id="O13665"/>
<dbReference type="BioGRID" id="277023">
    <property type="interactions" value="5"/>
</dbReference>
<dbReference type="FunCoup" id="O13665">
    <property type="interactions" value="548"/>
</dbReference>
<dbReference type="STRING" id="284812.O13665"/>
<dbReference type="iPTMnet" id="O13665"/>
<dbReference type="PaxDb" id="4896-SPBC27B12.04c.1"/>
<dbReference type="EnsemblFungi" id="SPBC27B12.04c.1">
    <property type="protein sequence ID" value="SPBC27B12.04c.1:pep"/>
    <property type="gene ID" value="SPBC27B12.04c"/>
</dbReference>
<dbReference type="GeneID" id="2540495"/>
<dbReference type="KEGG" id="spo:2540495"/>
<dbReference type="PomBase" id="SPBC27B12.04c">
    <property type="gene designation" value="far11"/>
</dbReference>
<dbReference type="VEuPathDB" id="FungiDB:SPBC27B12.04c"/>
<dbReference type="eggNOG" id="KOG3680">
    <property type="taxonomic scope" value="Eukaryota"/>
</dbReference>
<dbReference type="HOGENOM" id="CLU_003184_0_0_1"/>
<dbReference type="InParanoid" id="O13665"/>
<dbReference type="OMA" id="KMTRAMR"/>
<dbReference type="PhylomeDB" id="O13665"/>
<dbReference type="PRO" id="PR:O13665"/>
<dbReference type="Proteomes" id="UP000002485">
    <property type="component" value="Chromosome II"/>
</dbReference>
<dbReference type="GO" id="GO:0005829">
    <property type="term" value="C:cytosol"/>
    <property type="evidence" value="ECO:0000318"/>
    <property type="project" value="GO_Central"/>
</dbReference>
<dbReference type="GO" id="GO:0090443">
    <property type="term" value="C:FAR/SIN/STRIPAK complex"/>
    <property type="evidence" value="ECO:0000314"/>
    <property type="project" value="PomBase"/>
</dbReference>
<dbReference type="GO" id="GO:0000324">
    <property type="term" value="C:fungal-type vacuole"/>
    <property type="evidence" value="ECO:0007005"/>
    <property type="project" value="PomBase"/>
</dbReference>
<dbReference type="GO" id="GO:0044732">
    <property type="term" value="C:mitotic spindle pole body"/>
    <property type="evidence" value="ECO:0000269"/>
    <property type="project" value="PomBase"/>
</dbReference>
<dbReference type="GO" id="GO:0005635">
    <property type="term" value="C:nuclear envelope"/>
    <property type="evidence" value="ECO:0000314"/>
    <property type="project" value="PomBase"/>
</dbReference>
<dbReference type="GO" id="GO:0071957">
    <property type="term" value="C:old mitotic spindle pole body"/>
    <property type="evidence" value="ECO:0000314"/>
    <property type="project" value="PomBase"/>
</dbReference>
<dbReference type="GO" id="GO:0061509">
    <property type="term" value="P:asymmetric protein localization to old mitotic spindle pole body"/>
    <property type="evidence" value="ECO:0000315"/>
    <property type="project" value="PomBase"/>
</dbReference>
<dbReference type="GO" id="GO:0007010">
    <property type="term" value="P:cytoskeleton organization"/>
    <property type="evidence" value="ECO:0000318"/>
    <property type="project" value="GO_Central"/>
</dbReference>
<dbReference type="GO" id="GO:0031030">
    <property type="term" value="P:negative regulation of septation initiation signaling"/>
    <property type="evidence" value="ECO:0000315"/>
    <property type="project" value="PomBase"/>
</dbReference>
<dbReference type="InterPro" id="IPR040185">
    <property type="entry name" value="Far11/STRP"/>
</dbReference>
<dbReference type="InterPro" id="IPR021819">
    <property type="entry name" value="Far11/STRP_C"/>
</dbReference>
<dbReference type="InterPro" id="IPR012486">
    <property type="entry name" value="Far11/STRP_N"/>
</dbReference>
<dbReference type="PANTHER" id="PTHR13239:SF4">
    <property type="entry name" value="AT25231P"/>
    <property type="match status" value="1"/>
</dbReference>
<dbReference type="PANTHER" id="PTHR13239">
    <property type="entry name" value="PROTEIN REQUIRED FOR HYPHAL ANASTOMOSIS HAM-2"/>
    <property type="match status" value="1"/>
</dbReference>
<dbReference type="Pfam" id="PF11882">
    <property type="entry name" value="DUF3402"/>
    <property type="match status" value="2"/>
</dbReference>
<dbReference type="Pfam" id="PF07923">
    <property type="entry name" value="N1221"/>
    <property type="match status" value="1"/>
</dbReference>
<dbReference type="SMART" id="SM01293">
    <property type="entry name" value="DUF3402"/>
    <property type="match status" value="1"/>
</dbReference>
<dbReference type="SMART" id="SM01292">
    <property type="entry name" value="N1221"/>
    <property type="match status" value="1"/>
</dbReference>
<comment type="function">
    <text evidence="1">Participates in the control of the reentry into the cell cycle following pheromone treatment.</text>
</comment>
<comment type="subcellular location">
    <subcellularLocation>
        <location evidence="2">Vacuole</location>
    </subcellularLocation>
</comment>
<comment type="similarity">
    <text evidence="4">Belongs to the FAR11 family.</text>
</comment>
<reference key="1">
    <citation type="journal article" date="2000" name="Yeast">
        <title>A 38 kb segment containing the cdc2 gene from the left arm of fission yeast chromosome II: sequence analysis and characterization of the genomic DNA and cDNAs encoded on the segment.</title>
        <authorList>
            <person name="Machida M."/>
            <person name="Yamazaki S."/>
            <person name="Kunihiro S."/>
            <person name="Tanaka T."/>
            <person name="Kushida N."/>
            <person name="Jinno K."/>
            <person name="Haikawa Y."/>
            <person name="Yamazaki J."/>
            <person name="Yamamoto S."/>
            <person name="Sekine M."/>
            <person name="Oguchi A."/>
            <person name="Nagai Y."/>
            <person name="Sakai M."/>
            <person name="Aoki K."/>
            <person name="Ogura K."/>
            <person name="Kudoh Y."/>
            <person name="Kikuchi H."/>
            <person name="Zhang M.Q."/>
            <person name="Yanagida M."/>
        </authorList>
    </citation>
    <scope>NUCLEOTIDE SEQUENCE [GENOMIC DNA]</scope>
    <source>
        <strain>972 / ATCC 24843</strain>
    </source>
</reference>
<reference key="2">
    <citation type="journal article" date="2002" name="Nature">
        <title>The genome sequence of Schizosaccharomyces pombe.</title>
        <authorList>
            <person name="Wood V."/>
            <person name="Gwilliam R."/>
            <person name="Rajandream M.A."/>
            <person name="Lyne M.H."/>
            <person name="Lyne R."/>
            <person name="Stewart A."/>
            <person name="Sgouros J.G."/>
            <person name="Peat N."/>
            <person name="Hayles J."/>
            <person name="Baker S.G."/>
            <person name="Basham D."/>
            <person name="Bowman S."/>
            <person name="Brooks K."/>
            <person name="Brown D."/>
            <person name="Brown S."/>
            <person name="Chillingworth T."/>
            <person name="Churcher C.M."/>
            <person name="Collins M."/>
            <person name="Connor R."/>
            <person name="Cronin A."/>
            <person name="Davis P."/>
            <person name="Feltwell T."/>
            <person name="Fraser A."/>
            <person name="Gentles S."/>
            <person name="Goble A."/>
            <person name="Hamlin N."/>
            <person name="Harris D.E."/>
            <person name="Hidalgo J."/>
            <person name="Hodgson G."/>
            <person name="Holroyd S."/>
            <person name="Hornsby T."/>
            <person name="Howarth S."/>
            <person name="Huckle E.J."/>
            <person name="Hunt S."/>
            <person name="Jagels K."/>
            <person name="James K.D."/>
            <person name="Jones L."/>
            <person name="Jones M."/>
            <person name="Leather S."/>
            <person name="McDonald S."/>
            <person name="McLean J."/>
            <person name="Mooney P."/>
            <person name="Moule S."/>
            <person name="Mungall K.L."/>
            <person name="Murphy L.D."/>
            <person name="Niblett D."/>
            <person name="Odell C."/>
            <person name="Oliver K."/>
            <person name="O'Neil S."/>
            <person name="Pearson D."/>
            <person name="Quail M.A."/>
            <person name="Rabbinowitsch E."/>
            <person name="Rutherford K.M."/>
            <person name="Rutter S."/>
            <person name="Saunders D."/>
            <person name="Seeger K."/>
            <person name="Sharp S."/>
            <person name="Skelton J."/>
            <person name="Simmonds M.N."/>
            <person name="Squares R."/>
            <person name="Squares S."/>
            <person name="Stevens K."/>
            <person name="Taylor K."/>
            <person name="Taylor R.G."/>
            <person name="Tivey A."/>
            <person name="Walsh S.V."/>
            <person name="Warren T."/>
            <person name="Whitehead S."/>
            <person name="Woodward J.R."/>
            <person name="Volckaert G."/>
            <person name="Aert R."/>
            <person name="Robben J."/>
            <person name="Grymonprez B."/>
            <person name="Weltjens I."/>
            <person name="Vanstreels E."/>
            <person name="Rieger M."/>
            <person name="Schaefer M."/>
            <person name="Mueller-Auer S."/>
            <person name="Gabel C."/>
            <person name="Fuchs M."/>
            <person name="Duesterhoeft A."/>
            <person name="Fritzc C."/>
            <person name="Holzer E."/>
            <person name="Moestl D."/>
            <person name="Hilbert H."/>
            <person name="Borzym K."/>
            <person name="Langer I."/>
            <person name="Beck A."/>
            <person name="Lehrach H."/>
            <person name="Reinhardt R."/>
            <person name="Pohl T.M."/>
            <person name="Eger P."/>
            <person name="Zimmermann W."/>
            <person name="Wedler H."/>
            <person name="Wambutt R."/>
            <person name="Purnelle B."/>
            <person name="Goffeau A."/>
            <person name="Cadieu E."/>
            <person name="Dreano S."/>
            <person name="Gloux S."/>
            <person name="Lelaure V."/>
            <person name="Mottier S."/>
            <person name="Galibert F."/>
            <person name="Aves S.J."/>
            <person name="Xiang Z."/>
            <person name="Hunt C."/>
            <person name="Moore K."/>
            <person name="Hurst S.M."/>
            <person name="Lucas M."/>
            <person name="Rochet M."/>
            <person name="Gaillardin C."/>
            <person name="Tallada V.A."/>
            <person name="Garzon A."/>
            <person name="Thode G."/>
            <person name="Daga R.R."/>
            <person name="Cruzado L."/>
            <person name="Jimenez J."/>
            <person name="Sanchez M."/>
            <person name="del Rey F."/>
            <person name="Benito J."/>
            <person name="Dominguez A."/>
            <person name="Revuelta J.L."/>
            <person name="Moreno S."/>
            <person name="Armstrong J."/>
            <person name="Forsburg S.L."/>
            <person name="Cerutti L."/>
            <person name="Lowe T."/>
            <person name="McCombie W.R."/>
            <person name="Paulsen I."/>
            <person name="Potashkin J."/>
            <person name="Shpakovski G.V."/>
            <person name="Ussery D."/>
            <person name="Barrell B.G."/>
            <person name="Nurse P."/>
        </authorList>
    </citation>
    <scope>NUCLEOTIDE SEQUENCE [LARGE SCALE GENOMIC DNA]</scope>
    <source>
        <strain>972 / ATCC 24843</strain>
    </source>
</reference>
<reference key="3">
    <citation type="journal article" date="2006" name="Nat. Biotechnol.">
        <title>ORFeome cloning and global analysis of protein localization in the fission yeast Schizosaccharomyces pombe.</title>
        <authorList>
            <person name="Matsuyama A."/>
            <person name="Arai R."/>
            <person name="Yashiroda Y."/>
            <person name="Shirai A."/>
            <person name="Kamata A."/>
            <person name="Sekido S."/>
            <person name="Kobayashi Y."/>
            <person name="Hashimoto A."/>
            <person name="Hamamoto M."/>
            <person name="Hiraoka Y."/>
            <person name="Horinouchi S."/>
            <person name="Yoshida M."/>
        </authorList>
    </citation>
    <scope>SUBCELLULAR LOCATION [LARGE SCALE ANALYSIS]</scope>
</reference>
<reference key="4">
    <citation type="journal article" date="2008" name="J. Proteome Res.">
        <title>Phosphoproteome analysis of fission yeast.</title>
        <authorList>
            <person name="Wilson-Grady J.T."/>
            <person name="Villen J."/>
            <person name="Gygi S.P."/>
        </authorList>
    </citation>
    <scope>PHOSPHORYLATION [LARGE SCALE ANALYSIS] AT SER-500 AND THR-502</scope>
    <scope>IDENTIFICATION BY MASS SPECTROMETRY</scope>
</reference>
<feature type="chain" id="PRO_0000337251" description="Factor arrest protein 11">
    <location>
        <begin position="1"/>
        <end position="817"/>
    </location>
</feature>
<feature type="modified residue" description="Phosphoserine" evidence="3">
    <location>
        <position position="500"/>
    </location>
</feature>
<feature type="modified residue" description="Phosphothreonine" evidence="3">
    <location>
        <position position="502"/>
    </location>
</feature>
<proteinExistence type="evidence at protein level"/>
<accession>O13665</accession>
<sequence length="817" mass="95093">MAATTASCISFSQFQRLKKLIDSPASKHKPMEFKGTSKDDLEDDLNSFFDCEEELFLSANKIFYSKLRVYQTVRHWSLKQNWSSMSLDQKRNFILHCHHELSSGELLRNSALYSILYIAAGAYDSVGSFEEHVHSISENVYLLREFDIPKTVYSLFIEWNRTRKHSFLDNSRDEGFLNLLLSLMFFFLTLNNTDKTWIHSIRSLNPPVLPTLVKLFIDITSDYQLNLDKVIHSSLKKLSFLIFKVCIRLWGSQSYLQEKKAGLAEVLNISTSQQKPKTTALDYEVFRHEMATKFSSFADSYYPVPLDREQAHILPTLNTDSFHKSSFISSTRLCSPENPSLLVNTAKTSKMSARREQFQTNQNLPFCFTPNLEKLTIPYSVTEAANVFQNKTKRTLAVEQLLSERELLRRFTLQQRLVADLHEFYNSVKGPAHSFETEDPVLKFVSQSYDDLFPYMDNFIQLAVQLFYHISKKVNCLYVEAFSSSDAVLQRIQDNAVVDSPTEELSEQAARNRKSNVKIEYTEDFATGFAISGEISHSINNLEFVLYSLSSLFLMMLKWFRLSHVLRFERLAFLLYENHFLEIFNRHLTEGDCNRNTEKDVKCVRGGFFSYSSKMYKYDRVSIPVITRASSSRNLLITMNCLRVLEKVCKYSNIRKEIIARSNLHENLKKLLAIPHDKLRLYALKVLKLSVPFLGLKWKQANMSIITQIYLNCSLDLRDSWMFHENGSDTYRSAQLQETFLAILIRFYHIRLYGKKCKSLYQFCILEEMRLKKSIEELAASNMMEYIPESLWSYSFERSDTGFFENEFAAMHINDIA</sequence>
<evidence type="ECO:0000250" key="1"/>
<evidence type="ECO:0000269" key="2">
    <source>
    </source>
</evidence>
<evidence type="ECO:0000269" key="3">
    <source>
    </source>
</evidence>
<evidence type="ECO:0000305" key="4"/>
<name>FAR11_SCHPO</name>
<organism>
    <name type="scientific">Schizosaccharomyces pombe (strain 972 / ATCC 24843)</name>
    <name type="common">Fission yeast</name>
    <dbReference type="NCBI Taxonomy" id="284812"/>
    <lineage>
        <taxon>Eukaryota</taxon>
        <taxon>Fungi</taxon>
        <taxon>Dikarya</taxon>
        <taxon>Ascomycota</taxon>
        <taxon>Taphrinomycotina</taxon>
        <taxon>Schizosaccharomycetes</taxon>
        <taxon>Schizosaccharomycetales</taxon>
        <taxon>Schizosaccharomycetaceae</taxon>
        <taxon>Schizosaccharomyces</taxon>
    </lineage>
</organism>
<protein>
    <recommendedName>
        <fullName>Factor arrest protein 11</fullName>
    </recommendedName>
</protein>